<protein>
    <recommendedName>
        <fullName evidence="4">Beta-toxin Tf1a</fullName>
    </recommendedName>
</protein>
<evidence type="ECO:0000255" key="1"/>
<evidence type="ECO:0000255" key="2">
    <source>
        <dbReference type="PROSITE-ProRule" id="PRU01210"/>
    </source>
</evidence>
<evidence type="ECO:0000269" key="3">
    <source>
    </source>
</evidence>
<evidence type="ECO:0000303" key="4">
    <source>
    </source>
</evidence>
<evidence type="ECO:0000305" key="5"/>
<evidence type="ECO:0000305" key="6">
    <source>
    </source>
</evidence>
<organism>
    <name type="scientific">Tityus fasciolatus</name>
    <name type="common">Central Brazilian scorpion</name>
    <dbReference type="NCBI Taxonomy" id="203543"/>
    <lineage>
        <taxon>Eukaryota</taxon>
        <taxon>Metazoa</taxon>
        <taxon>Ecdysozoa</taxon>
        <taxon>Arthropoda</taxon>
        <taxon>Chelicerata</taxon>
        <taxon>Arachnida</taxon>
        <taxon>Scorpiones</taxon>
        <taxon>Buthida</taxon>
        <taxon>Buthoidea</taxon>
        <taxon>Buthidae</taxon>
        <taxon>Tityus</taxon>
    </lineage>
</organism>
<comment type="function">
    <text evidence="3">Beta toxins bind voltage-independently at site-4 of sodium channels (Nav) and shift the voltage of activation toward more negative potentials thereby affecting sodium channel activation and promoting spontaneous and repetitive firing. The toxin induces a leftward shift, on all channels tested (including Blattella germanica and Varroa destructor Nav1), displacing a change in voltage dependence activation to more hyperpolarized potentials (PubMed:30131471). In addition, the toxin mostly inhibits peak current of hNav1.4/SCN4A (53% inhibition of peak current at 100 nM) and hNav1.5/SCN5A (71% inhibition) (PubMed:30131471).</text>
</comment>
<comment type="subcellular location">
    <subcellularLocation>
        <location evidence="3">Secreted</location>
    </subcellularLocation>
</comment>
<comment type="tissue specificity">
    <text evidence="6">Expressed by the venom gland.</text>
</comment>
<comment type="domain">
    <text evidence="5">Has the structural arrangement of an alpha-helix connected to antiparallel beta-sheets by disulfide bonds (CS-alpha/beta).</text>
</comment>
<comment type="mass spectrometry"/>
<comment type="miscellaneous">
    <text evidence="3">Negative results: shows a weak peak current inhibition of Nav1.1/SCN1A, Nav1.2/SCN2A, Nav1.3/SCN3A, Nav1.6/SCN8A, Nav1.7/SCN9A (17-30% inhibition of peak current at 100 nM). It does not inhibit peak current on insect (BgNaV1 from Blattella germanica) and arachnidan (VdNaV1 from Varroa destructor) sodium channel subtypes (tested at 100 nM) (PubMed:30131471).</text>
</comment>
<comment type="similarity">
    <text evidence="5">Belongs to the long (4 C-C) scorpion toxin superfamily. Sodium channel inhibitor family. Beta subfamily.</text>
</comment>
<accession>P0DQH5</accession>
<reference key="1">
    <citation type="journal article" date="2018" name="Toxins">
        <title>Subtype specificity of beta-toxin Tf1a from Tityus fasciolatus in voltage gated sodium channels.</title>
        <authorList>
            <person name="Mata D.O.D."/>
            <person name="Tibery D.V."/>
            <person name="Campos L.A."/>
            <person name="Camargos T.S."/>
            <person name="Peigneur S."/>
            <person name="Tytgat J."/>
            <person name="Schwartz E.F."/>
        </authorList>
    </citation>
    <scope>NUCLEOTIDE SEQUENCE [MRNA]</scope>
    <scope>PROTEIN SEQUENCE OF 30-46 AND 59-73</scope>
    <scope>FUNCTION</scope>
    <scope>SUBCELLULAR LOCATION</scope>
    <scope>MASS SPECTROMETRY</scope>
    <scope>AMIDATION AT CYS-81</scope>
    <source>
        <tissue>Venom</tissue>
        <tissue>Venom gland</tissue>
    </source>
</reference>
<name>SCX1A_TITFA</name>
<proteinExistence type="evidence at protein level"/>
<dbReference type="SMR" id="P0DQH5"/>
<dbReference type="GO" id="GO:0005576">
    <property type="term" value="C:extracellular region"/>
    <property type="evidence" value="ECO:0007669"/>
    <property type="project" value="UniProtKB-SubCell"/>
</dbReference>
<dbReference type="GO" id="GO:0019871">
    <property type="term" value="F:sodium channel inhibitor activity"/>
    <property type="evidence" value="ECO:0007669"/>
    <property type="project" value="InterPro"/>
</dbReference>
<dbReference type="GO" id="GO:0090729">
    <property type="term" value="F:toxin activity"/>
    <property type="evidence" value="ECO:0007669"/>
    <property type="project" value="UniProtKB-KW"/>
</dbReference>
<dbReference type="GO" id="GO:0006952">
    <property type="term" value="P:defense response"/>
    <property type="evidence" value="ECO:0007669"/>
    <property type="project" value="InterPro"/>
</dbReference>
<dbReference type="CDD" id="cd23106">
    <property type="entry name" value="neurotoxins_LC_scorpion"/>
    <property type="match status" value="1"/>
</dbReference>
<dbReference type="FunFam" id="3.30.30.10:FF:000002">
    <property type="entry name" value="Alpha-like toxin BmK-M1"/>
    <property type="match status" value="1"/>
</dbReference>
<dbReference type="Gene3D" id="3.30.30.10">
    <property type="entry name" value="Knottin, scorpion toxin-like"/>
    <property type="match status" value="1"/>
</dbReference>
<dbReference type="InterPro" id="IPR044062">
    <property type="entry name" value="LCN-type_CS_alpha_beta_dom"/>
</dbReference>
<dbReference type="InterPro" id="IPR003614">
    <property type="entry name" value="Scorpion_toxin-like"/>
</dbReference>
<dbReference type="InterPro" id="IPR036574">
    <property type="entry name" value="Scorpion_toxin-like_sf"/>
</dbReference>
<dbReference type="InterPro" id="IPR018218">
    <property type="entry name" value="Scorpion_toxinL"/>
</dbReference>
<dbReference type="InterPro" id="IPR002061">
    <property type="entry name" value="Scorpion_toxinL/defensin"/>
</dbReference>
<dbReference type="Pfam" id="PF00537">
    <property type="entry name" value="Toxin_3"/>
    <property type="match status" value="1"/>
</dbReference>
<dbReference type="PRINTS" id="PR00285">
    <property type="entry name" value="SCORPNTOXIN"/>
</dbReference>
<dbReference type="SMART" id="SM00505">
    <property type="entry name" value="Knot1"/>
    <property type="match status" value="1"/>
</dbReference>
<dbReference type="SUPFAM" id="SSF57095">
    <property type="entry name" value="Scorpion toxin-like"/>
    <property type="match status" value="1"/>
</dbReference>
<dbReference type="PROSITE" id="PS51863">
    <property type="entry name" value="LCN_CSAB"/>
    <property type="match status" value="1"/>
</dbReference>
<feature type="signal peptide" evidence="1">
    <location>
        <begin position="1"/>
        <end position="20"/>
    </location>
</feature>
<feature type="chain" id="PRO_0000447418" description="Beta-toxin Tf1a" evidence="6">
    <location>
        <begin position="21"/>
        <end position="81"/>
    </location>
</feature>
<feature type="domain" description="LCN-type CS-alpha/beta" evidence="2">
    <location>
        <begin position="21"/>
        <end position="82"/>
    </location>
</feature>
<feature type="modified residue" description="Cysteine amide" evidence="3">
    <location>
        <position position="81"/>
    </location>
</feature>
<feature type="disulfide bond" evidence="2">
    <location>
        <begin position="31"/>
        <end position="81"/>
    </location>
</feature>
<feature type="disulfide bond" evidence="2">
    <location>
        <begin position="35"/>
        <end position="57"/>
    </location>
</feature>
<feature type="disulfide bond" evidence="2">
    <location>
        <begin position="43"/>
        <end position="62"/>
    </location>
</feature>
<feature type="disulfide bond" evidence="2">
    <location>
        <begin position="47"/>
        <end position="64"/>
    </location>
</feature>
<sequence>MKGMILFISCLLLIGIVVECKEGYLMDHEGCKLSCFIRPSGYCGSECKIKKGSSGYCAWPACYCYGLPNWVKVWERATNRCGKK</sequence>
<keyword id="KW-0027">Amidation</keyword>
<keyword id="KW-0903">Direct protein sequencing</keyword>
<keyword id="KW-1015">Disulfide bond</keyword>
<keyword id="KW-0872">Ion channel impairing toxin</keyword>
<keyword id="KW-0528">Neurotoxin</keyword>
<keyword id="KW-0964">Secreted</keyword>
<keyword id="KW-0732">Signal</keyword>
<keyword id="KW-0800">Toxin</keyword>
<keyword id="KW-0738">Voltage-gated sodium channel impairing toxin</keyword>